<keyword id="KW-0050">Antiport</keyword>
<keyword id="KW-0997">Cell inner membrane</keyword>
<keyword id="KW-1003">Cell membrane</keyword>
<keyword id="KW-0406">Ion transport</keyword>
<keyword id="KW-0472">Membrane</keyword>
<keyword id="KW-0915">Sodium</keyword>
<keyword id="KW-0739">Sodium transport</keyword>
<keyword id="KW-0812">Transmembrane</keyword>
<keyword id="KW-1133">Transmembrane helix</keyword>
<keyword id="KW-0813">Transport</keyword>
<protein>
    <recommendedName>
        <fullName evidence="1">Multidrug resistance protein MdtK</fullName>
    </recommendedName>
    <alternativeName>
        <fullName evidence="1">Multidrug-efflux transporter</fullName>
    </alternativeName>
</protein>
<reference key="1">
    <citation type="journal article" date="2008" name="PLoS Genet.">
        <title>Complete genome sequence of the N2-fixing broad host range endophyte Klebsiella pneumoniae 342 and virulence predictions verified in mice.</title>
        <authorList>
            <person name="Fouts D.E."/>
            <person name="Tyler H.L."/>
            <person name="DeBoy R.T."/>
            <person name="Daugherty S."/>
            <person name="Ren Q."/>
            <person name="Badger J.H."/>
            <person name="Durkin A.S."/>
            <person name="Huot H."/>
            <person name="Shrivastava S."/>
            <person name="Kothari S."/>
            <person name="Dodson R.J."/>
            <person name="Mohamoud Y."/>
            <person name="Khouri H."/>
            <person name="Roesch L.F.W."/>
            <person name="Krogfelt K.A."/>
            <person name="Struve C."/>
            <person name="Triplett E.W."/>
            <person name="Methe B.A."/>
        </authorList>
    </citation>
    <scope>NUCLEOTIDE SEQUENCE [LARGE SCALE GENOMIC DNA]</scope>
    <source>
        <strain>342</strain>
    </source>
</reference>
<accession>B5XWL3</accession>
<proteinExistence type="inferred from homology"/>
<evidence type="ECO:0000255" key="1">
    <source>
        <dbReference type="HAMAP-Rule" id="MF_00400"/>
    </source>
</evidence>
<feature type="chain" id="PRO_1000191098" description="Multidrug resistance protein MdtK">
    <location>
        <begin position="1"/>
        <end position="457"/>
    </location>
</feature>
<feature type="transmembrane region" description="Helical" evidence="1">
    <location>
        <begin position="11"/>
        <end position="31"/>
    </location>
</feature>
<feature type="transmembrane region" description="Helical" evidence="1">
    <location>
        <begin position="53"/>
        <end position="73"/>
    </location>
</feature>
<feature type="transmembrane region" description="Helical" evidence="1">
    <location>
        <begin position="93"/>
        <end position="113"/>
    </location>
</feature>
<feature type="transmembrane region" description="Helical" evidence="1">
    <location>
        <begin position="127"/>
        <end position="147"/>
    </location>
</feature>
<feature type="transmembrane region" description="Helical" evidence="1">
    <location>
        <begin position="160"/>
        <end position="180"/>
    </location>
</feature>
<feature type="transmembrane region" description="Helical" evidence="1">
    <location>
        <begin position="191"/>
        <end position="211"/>
    </location>
</feature>
<feature type="transmembrane region" description="Helical" evidence="1">
    <location>
        <begin position="243"/>
        <end position="263"/>
    </location>
</feature>
<feature type="transmembrane region" description="Helical" evidence="1">
    <location>
        <begin position="276"/>
        <end position="296"/>
    </location>
</feature>
<feature type="transmembrane region" description="Helical" evidence="1">
    <location>
        <begin position="316"/>
        <end position="336"/>
    </location>
</feature>
<feature type="transmembrane region" description="Helical" evidence="1">
    <location>
        <begin position="350"/>
        <end position="370"/>
    </location>
</feature>
<feature type="transmembrane region" description="Helical" evidence="1">
    <location>
        <begin position="387"/>
        <end position="407"/>
    </location>
</feature>
<feature type="transmembrane region" description="Helical" evidence="1">
    <location>
        <begin position="418"/>
        <end position="438"/>
    </location>
</feature>
<dbReference type="EMBL" id="CP000964">
    <property type="protein sequence ID" value="ACI08251.1"/>
    <property type="molecule type" value="Genomic_DNA"/>
</dbReference>
<dbReference type="SMR" id="B5XWL3"/>
<dbReference type="KEGG" id="kpe:KPK_2346"/>
<dbReference type="HOGENOM" id="CLU_012893_6_0_6"/>
<dbReference type="Proteomes" id="UP000001734">
    <property type="component" value="Chromosome"/>
</dbReference>
<dbReference type="GO" id="GO:0005886">
    <property type="term" value="C:plasma membrane"/>
    <property type="evidence" value="ECO:0007669"/>
    <property type="project" value="UniProtKB-SubCell"/>
</dbReference>
<dbReference type="GO" id="GO:0015297">
    <property type="term" value="F:antiporter activity"/>
    <property type="evidence" value="ECO:0007669"/>
    <property type="project" value="UniProtKB-UniRule"/>
</dbReference>
<dbReference type="GO" id="GO:0042910">
    <property type="term" value="F:xenobiotic transmembrane transporter activity"/>
    <property type="evidence" value="ECO:0007669"/>
    <property type="project" value="UniProtKB-UniRule"/>
</dbReference>
<dbReference type="GO" id="GO:0006814">
    <property type="term" value="P:sodium ion transport"/>
    <property type="evidence" value="ECO:0007669"/>
    <property type="project" value="UniProtKB-UniRule"/>
</dbReference>
<dbReference type="GO" id="GO:0006855">
    <property type="term" value="P:xenobiotic transmembrane transport"/>
    <property type="evidence" value="ECO:0007669"/>
    <property type="project" value="UniProtKB-UniRule"/>
</dbReference>
<dbReference type="CDD" id="cd13131">
    <property type="entry name" value="MATE_NorM_like"/>
    <property type="match status" value="1"/>
</dbReference>
<dbReference type="HAMAP" id="MF_00400">
    <property type="entry name" value="MdtK"/>
    <property type="match status" value="1"/>
</dbReference>
<dbReference type="InterPro" id="IPR002528">
    <property type="entry name" value="MATE_fam"/>
</dbReference>
<dbReference type="InterPro" id="IPR050222">
    <property type="entry name" value="MATE_MdtK"/>
</dbReference>
<dbReference type="InterPro" id="IPR048279">
    <property type="entry name" value="MdtK-like"/>
</dbReference>
<dbReference type="InterPro" id="IPR022913">
    <property type="entry name" value="Multidrug-R_MdtK"/>
</dbReference>
<dbReference type="NCBIfam" id="TIGR00797">
    <property type="entry name" value="matE"/>
    <property type="match status" value="1"/>
</dbReference>
<dbReference type="PANTHER" id="PTHR43298:SF2">
    <property type="entry name" value="FMN_FAD EXPORTER YEEO-RELATED"/>
    <property type="match status" value="1"/>
</dbReference>
<dbReference type="PANTHER" id="PTHR43298">
    <property type="entry name" value="MULTIDRUG RESISTANCE PROTEIN NORM-RELATED"/>
    <property type="match status" value="1"/>
</dbReference>
<dbReference type="Pfam" id="PF01554">
    <property type="entry name" value="MatE"/>
    <property type="match status" value="2"/>
</dbReference>
<dbReference type="PIRSF" id="PIRSF006603">
    <property type="entry name" value="DinF"/>
    <property type="match status" value="1"/>
</dbReference>
<gene>
    <name evidence="1" type="primary">mdtK</name>
    <name type="ordered locus">KPK_2346</name>
</gene>
<comment type="function">
    <text evidence="1">Multidrug efflux pump that functions probably as a Na(+)/drug antiporter.</text>
</comment>
<comment type="subcellular location">
    <subcellularLocation>
        <location evidence="1">Cell inner membrane</location>
        <topology evidence="1">Multi-pass membrane protein</topology>
    </subcellularLocation>
</comment>
<comment type="similarity">
    <text evidence="1">Belongs to the multi antimicrobial extrusion (MATE) (TC 2.A.66.1) family. MdtK subfamily.</text>
</comment>
<organism>
    <name type="scientific">Klebsiella pneumoniae (strain 342)</name>
    <dbReference type="NCBI Taxonomy" id="507522"/>
    <lineage>
        <taxon>Bacteria</taxon>
        <taxon>Pseudomonadati</taxon>
        <taxon>Pseudomonadota</taxon>
        <taxon>Gammaproteobacteria</taxon>
        <taxon>Enterobacterales</taxon>
        <taxon>Enterobacteriaceae</taxon>
        <taxon>Klebsiella/Raoultella group</taxon>
        <taxon>Klebsiella</taxon>
        <taxon>Klebsiella pneumoniae complex</taxon>
    </lineage>
</organism>
<sequence length="457" mass="49694">MQKYFVEARQLLALAIPVILAQVAQTAMGFVDTVMAGGYSATDMAAVAIGTSIWLPAILFGHGLLLALTPVVAQLNGSGRRDRIAQQVRQGFWLAGFVSVLIMVVLWNAGYIISSMHNIDPLLAEKAVGYLRALLWGAPGYLFFQVARNQCEGLAKTKPGMVMGFIGLLVNIPVNYIFIYGHFGMPELGGVGCGVATASVYWVMFASMLWWVRRARSMRDIRCAERFSRPDVAVLLRLVQLGLPIALALFFEVTLFAVVALLVSPLGIIDVAGHQIALNFSSLMFVLPLSLAAAVTIRVGFRLGQGSTIDAQVSARTGVGVGVCLAVFTAIFTVLMREQIALLYNDNPEVVLLASHLMLLAAIYQISDSIQVIGSGILRGYKDTRSIFFITFTAYWVLGLPSGYLLALTDMVVPRMGPAGFWCGFIIGLTSAAIMMMLRMRFLQRQPSSIILQRAAR</sequence>
<name>MDTK_KLEP3</name>